<organism>
    <name type="scientific">Candida glabrata (strain ATCC 2001 / BCRC 20586 / JCM 3761 / NBRC 0622 / NRRL Y-65 / CBS 138)</name>
    <name type="common">Yeast</name>
    <name type="synonym">Nakaseomyces glabratus</name>
    <dbReference type="NCBI Taxonomy" id="284593"/>
    <lineage>
        <taxon>Eukaryota</taxon>
        <taxon>Fungi</taxon>
        <taxon>Dikarya</taxon>
        <taxon>Ascomycota</taxon>
        <taxon>Saccharomycotina</taxon>
        <taxon>Saccharomycetes</taxon>
        <taxon>Saccharomycetales</taxon>
        <taxon>Saccharomycetaceae</taxon>
        <taxon>Nakaseomyces</taxon>
    </lineage>
</organism>
<name>ARP6_CANGA</name>
<keyword id="KW-0010">Activator</keyword>
<keyword id="KW-0156">Chromatin regulator</keyword>
<keyword id="KW-0963">Cytoplasm</keyword>
<keyword id="KW-0206">Cytoskeleton</keyword>
<keyword id="KW-0539">Nucleus</keyword>
<keyword id="KW-1185">Reference proteome</keyword>
<keyword id="KW-0804">Transcription</keyword>
<keyword id="KW-0805">Transcription regulation</keyword>
<evidence type="ECO:0000250" key="1"/>
<evidence type="ECO:0000305" key="2"/>
<reference key="1">
    <citation type="journal article" date="2004" name="Nature">
        <title>Genome evolution in yeasts.</title>
        <authorList>
            <person name="Dujon B."/>
            <person name="Sherman D."/>
            <person name="Fischer G."/>
            <person name="Durrens P."/>
            <person name="Casaregola S."/>
            <person name="Lafontaine I."/>
            <person name="de Montigny J."/>
            <person name="Marck C."/>
            <person name="Neuveglise C."/>
            <person name="Talla E."/>
            <person name="Goffard N."/>
            <person name="Frangeul L."/>
            <person name="Aigle M."/>
            <person name="Anthouard V."/>
            <person name="Babour A."/>
            <person name="Barbe V."/>
            <person name="Barnay S."/>
            <person name="Blanchin S."/>
            <person name="Beckerich J.-M."/>
            <person name="Beyne E."/>
            <person name="Bleykasten C."/>
            <person name="Boisrame A."/>
            <person name="Boyer J."/>
            <person name="Cattolico L."/>
            <person name="Confanioleri F."/>
            <person name="de Daruvar A."/>
            <person name="Despons L."/>
            <person name="Fabre E."/>
            <person name="Fairhead C."/>
            <person name="Ferry-Dumazet H."/>
            <person name="Groppi A."/>
            <person name="Hantraye F."/>
            <person name="Hennequin C."/>
            <person name="Jauniaux N."/>
            <person name="Joyet P."/>
            <person name="Kachouri R."/>
            <person name="Kerrest A."/>
            <person name="Koszul R."/>
            <person name="Lemaire M."/>
            <person name="Lesur I."/>
            <person name="Ma L."/>
            <person name="Muller H."/>
            <person name="Nicaud J.-M."/>
            <person name="Nikolski M."/>
            <person name="Oztas S."/>
            <person name="Ozier-Kalogeropoulos O."/>
            <person name="Pellenz S."/>
            <person name="Potier S."/>
            <person name="Richard G.-F."/>
            <person name="Straub M.-L."/>
            <person name="Suleau A."/>
            <person name="Swennen D."/>
            <person name="Tekaia F."/>
            <person name="Wesolowski-Louvel M."/>
            <person name="Westhof E."/>
            <person name="Wirth B."/>
            <person name="Zeniou-Meyer M."/>
            <person name="Zivanovic Y."/>
            <person name="Bolotin-Fukuhara M."/>
            <person name="Thierry A."/>
            <person name="Bouchier C."/>
            <person name="Caudron B."/>
            <person name="Scarpelli C."/>
            <person name="Gaillardin C."/>
            <person name="Weissenbach J."/>
            <person name="Wincker P."/>
            <person name="Souciet J.-L."/>
        </authorList>
    </citation>
    <scope>NUCLEOTIDE SEQUENCE [LARGE SCALE GENOMIC DNA]</scope>
    <source>
        <strain>ATCC 2001 / BCRC 20586 / JCM 3761 / NBRC 0622 / NRRL Y-65 / CBS 138</strain>
    </source>
</reference>
<comment type="function">
    <text evidence="1">Component of the SWR1 complex which mediates the ATP-dependent exchange of histone H2A for the H2A variant HZT1 leading to transcriptional regulation of selected genes by chromatin remodeling. Involved in chromosome stability (By similarity).</text>
</comment>
<comment type="subunit">
    <text evidence="1">Component of the SWR1 chromatin remodeling complex.</text>
</comment>
<comment type="subcellular location">
    <subcellularLocation>
        <location evidence="1">Cytoplasm</location>
    </subcellularLocation>
    <subcellularLocation>
        <location evidence="1">Cytoplasm</location>
        <location evidence="1">Cytoskeleton</location>
    </subcellularLocation>
    <subcellularLocation>
        <location evidence="1">Nucleus</location>
    </subcellularLocation>
</comment>
<comment type="similarity">
    <text evidence="2">Belongs to the actin family. ARP6 subfamily.</text>
</comment>
<feature type="chain" id="PRO_0000089113" description="Actin-like protein ARP6">
    <location>
        <begin position="1"/>
        <end position="421"/>
    </location>
</feature>
<protein>
    <recommendedName>
        <fullName>Actin-like protein ARP6</fullName>
    </recommendedName>
</protein>
<sequence>MTADQAIVIDNGSYQVKFGLASEVRPRVALNALAKDKYGVTHLSNQVQNIKDISSVVFRRPHELGQLTSWELESCIWDYCLYNPDEFGIDWQSLENRHVVLSETCMTLPELSKNTDQVLFEEYEVDSLYKAPTAAYIPFYTTNENIKTISGKSDHGELDIEEKIEAGKEYNDFSLVIDSGFNCTWVIPIVKGVPYYKAVKKLDVGGRFLNGLLKETISFRHYNVMDESILVNNIKEQCLYVDPVSYFEAFKAKGKNKIDFVLPDFQTSFQGYVRDPKTALPDNAQILTLTDERFSVPEAFFHPEISQSLKPGIIETVLESIYMLPELLRPLMASNIVCMGGNFNLPGFTDRLVSELQRQLPTDWVCRAKISSGDKSLTGWTAMAKFAHTDAYKKARVTKEDYFEHGLDWTTKERFGYQNWV</sequence>
<gene>
    <name type="primary">ARP6</name>
    <name type="ordered locus">CAGL0L12166g</name>
</gene>
<proteinExistence type="inferred from homology"/>
<dbReference type="EMBL" id="CR380958">
    <property type="protein sequence ID" value="CAG62271.1"/>
    <property type="molecule type" value="Genomic_DNA"/>
</dbReference>
<dbReference type="RefSeq" id="XP_449297.1">
    <property type="nucleotide sequence ID" value="XM_449297.1"/>
</dbReference>
<dbReference type="SMR" id="Q6FKE7"/>
<dbReference type="FunCoup" id="Q6FKE7">
    <property type="interactions" value="381"/>
</dbReference>
<dbReference type="STRING" id="284593.Q6FKE7"/>
<dbReference type="EnsemblFungi" id="CAGL0L12166g-T">
    <property type="protein sequence ID" value="CAGL0L12166g-T-p1"/>
    <property type="gene ID" value="CAGL0L12166g"/>
</dbReference>
<dbReference type="KEGG" id="cgr:2890687"/>
<dbReference type="CGD" id="CAL0135506">
    <property type="gene designation" value="CAGL0L12166g"/>
</dbReference>
<dbReference type="VEuPathDB" id="FungiDB:CAGL0L12166g"/>
<dbReference type="eggNOG" id="KOG0680">
    <property type="taxonomic scope" value="Eukaryota"/>
</dbReference>
<dbReference type="HOGENOM" id="CLU_027965_1_1_1"/>
<dbReference type="InParanoid" id="Q6FKE7"/>
<dbReference type="OMA" id="FFEEYEC"/>
<dbReference type="Proteomes" id="UP000002428">
    <property type="component" value="Chromosome L"/>
</dbReference>
<dbReference type="GO" id="GO:0005737">
    <property type="term" value="C:cytoplasm"/>
    <property type="evidence" value="ECO:0007669"/>
    <property type="project" value="UniProtKB-SubCell"/>
</dbReference>
<dbReference type="GO" id="GO:0005856">
    <property type="term" value="C:cytoskeleton"/>
    <property type="evidence" value="ECO:0007669"/>
    <property type="project" value="UniProtKB-SubCell"/>
</dbReference>
<dbReference type="GO" id="GO:0034399">
    <property type="term" value="C:nuclear periphery"/>
    <property type="evidence" value="ECO:0007669"/>
    <property type="project" value="EnsemblFungi"/>
</dbReference>
<dbReference type="GO" id="GO:0000812">
    <property type="term" value="C:Swr1 complex"/>
    <property type="evidence" value="ECO:0007669"/>
    <property type="project" value="EnsemblFungi"/>
</dbReference>
<dbReference type="GO" id="GO:0031491">
    <property type="term" value="F:nucleosome binding"/>
    <property type="evidence" value="ECO:0007669"/>
    <property type="project" value="EnsemblFungi"/>
</dbReference>
<dbReference type="GO" id="GO:0006338">
    <property type="term" value="P:chromatin remodeling"/>
    <property type="evidence" value="ECO:0007669"/>
    <property type="project" value="EnsemblFungi"/>
</dbReference>
<dbReference type="CDD" id="cd10210">
    <property type="entry name" value="ASKHA_NBD_Arp6"/>
    <property type="match status" value="1"/>
</dbReference>
<dbReference type="FunFam" id="3.90.640.10:FF:000040">
    <property type="entry name" value="Actin-like protein ARP6"/>
    <property type="match status" value="1"/>
</dbReference>
<dbReference type="Gene3D" id="3.30.420.40">
    <property type="match status" value="2"/>
</dbReference>
<dbReference type="Gene3D" id="3.90.640.10">
    <property type="entry name" value="Actin, Chain A, domain 4"/>
    <property type="match status" value="1"/>
</dbReference>
<dbReference type="InterPro" id="IPR004000">
    <property type="entry name" value="Actin"/>
</dbReference>
<dbReference type="InterPro" id="IPR043129">
    <property type="entry name" value="ATPase_NBD"/>
</dbReference>
<dbReference type="PANTHER" id="PTHR11937">
    <property type="entry name" value="ACTIN"/>
    <property type="match status" value="1"/>
</dbReference>
<dbReference type="Pfam" id="PF00022">
    <property type="entry name" value="Actin"/>
    <property type="match status" value="1"/>
</dbReference>
<dbReference type="SMART" id="SM00268">
    <property type="entry name" value="ACTIN"/>
    <property type="match status" value="1"/>
</dbReference>
<dbReference type="SUPFAM" id="SSF53067">
    <property type="entry name" value="Actin-like ATPase domain"/>
    <property type="match status" value="2"/>
</dbReference>
<accession>Q6FKE7</accession>